<accession>P05959</accession>
<feature type="initiator methionine" description="Removed; by host" evidence="1">
    <location>
        <position position="1"/>
    </location>
</feature>
<feature type="chain" id="PRO_0000261278" description="Gag-Pol polyprotein">
    <location>
        <begin position="2"/>
        <end position="1436"/>
    </location>
</feature>
<feature type="chain" id="PRO_0000042421" description="Matrix protein p17" evidence="1">
    <location>
        <begin position="2"/>
        <end position="132"/>
    </location>
</feature>
<feature type="chain" id="PRO_0000042422" description="Capsid protein p24" evidence="1">
    <location>
        <begin position="133"/>
        <end position="363"/>
    </location>
</feature>
<feature type="peptide" id="PRO_0000042423" description="Spacer peptide 1" evidence="1">
    <location>
        <begin position="364"/>
        <end position="377"/>
    </location>
</feature>
<feature type="chain" id="PRO_0000042424" description="Nucleocapsid protein p7" evidence="1">
    <location>
        <begin position="378"/>
        <end position="434"/>
    </location>
</feature>
<feature type="peptide" id="PRO_0000246728" description="Transframe peptide" evidence="8">
    <location>
        <begin position="435"/>
        <end position="442"/>
    </location>
</feature>
<feature type="chain" id="PRO_0000042425" description="p6-pol" evidence="8">
    <location>
        <begin position="443"/>
        <end position="489"/>
    </location>
</feature>
<feature type="chain" id="PRO_0000038663" description="Protease" evidence="1">
    <location>
        <begin position="490"/>
        <end position="588"/>
    </location>
</feature>
<feature type="chain" id="PRO_0000042426" description="Reverse transcriptase/ribonuclease H" evidence="1">
    <location>
        <begin position="589"/>
        <end position="1148"/>
    </location>
</feature>
<feature type="chain" id="PRO_0000042427" description="p51 RT" evidence="1">
    <location>
        <begin position="589"/>
        <end position="1028"/>
    </location>
</feature>
<feature type="chain" id="PRO_0000042428" description="p15" evidence="1">
    <location>
        <begin position="1029"/>
        <end position="1148"/>
    </location>
</feature>
<feature type="chain" id="PRO_0000042429" description="Integrase" evidence="1">
    <location>
        <begin position="1149"/>
        <end position="1436"/>
    </location>
</feature>
<feature type="domain" description="Peptidase A2" evidence="10">
    <location>
        <begin position="509"/>
        <end position="578"/>
    </location>
</feature>
<feature type="domain" description="Reverse transcriptase" evidence="11">
    <location>
        <begin position="632"/>
        <end position="822"/>
    </location>
</feature>
<feature type="domain" description="RNase H type-1" evidence="12">
    <location>
        <begin position="1022"/>
        <end position="1145"/>
    </location>
</feature>
<feature type="domain" description="Integrase catalytic" evidence="14">
    <location>
        <begin position="1202"/>
        <end position="1352"/>
    </location>
</feature>
<feature type="zinc finger region" description="CCHC-type 1" evidence="9">
    <location>
        <begin position="390"/>
        <end position="407"/>
    </location>
</feature>
<feature type="zinc finger region" description="CCHC-type 2" evidence="9">
    <location>
        <begin position="411"/>
        <end position="428"/>
    </location>
</feature>
<feature type="zinc finger region" description="Integrase-type" evidence="13">
    <location>
        <begin position="1151"/>
        <end position="1192"/>
    </location>
</feature>
<feature type="DNA-binding region" description="Integrase-type" evidence="15">
    <location>
        <begin position="1371"/>
        <end position="1418"/>
    </location>
</feature>
<feature type="region of interest" description="Interaction with Gp41" evidence="7">
    <location>
        <begin position="7"/>
        <end position="31"/>
    </location>
</feature>
<feature type="region of interest" description="Interaction with host CALM1" evidence="5">
    <location>
        <begin position="8"/>
        <end position="43"/>
    </location>
</feature>
<feature type="region of interest" description="Interaction with host AP3D1" evidence="7">
    <location>
        <begin position="12"/>
        <end position="19"/>
    </location>
</feature>
<feature type="region of interest" description="Interaction with membrane phosphatidylinositol 4,5-bisphosphate and RNA" evidence="7">
    <location>
        <begin position="14"/>
        <end position="33"/>
    </location>
</feature>
<feature type="region of interest" description="Interaction with membrane phosphatidylinositol 4,5-bisphosphate" evidence="7">
    <location>
        <begin position="73"/>
        <end position="77"/>
    </location>
</feature>
<feature type="region of interest" description="Disordered" evidence="17">
    <location>
        <begin position="106"/>
        <end position="128"/>
    </location>
</feature>
<feature type="region of interest" description="Interaction with human PPIA/CYPA and NUP153" evidence="7">
    <location>
        <begin position="189"/>
        <end position="227"/>
    </location>
</feature>
<feature type="region of interest" description="Dimerization/Multimerization of capsid protein p24" evidence="5">
    <location>
        <begin position="277"/>
        <end position="363"/>
    </location>
</feature>
<feature type="region of interest" description="Disordered" evidence="17">
    <location>
        <begin position="446"/>
        <end position="465"/>
    </location>
</feature>
<feature type="region of interest" description="Dimerization of protease" evidence="5">
    <location>
        <begin position="490"/>
        <end position="494"/>
    </location>
</feature>
<feature type="region of interest" description="Dimerization of protease" evidence="5">
    <location>
        <begin position="538"/>
        <end position="544"/>
    </location>
</feature>
<feature type="region of interest" description="Dimerization of protease" evidence="5">
    <location>
        <begin position="577"/>
        <end position="589"/>
    </location>
</feature>
<feature type="region of interest" description="RT 'primer grip'" evidence="1">
    <location>
        <begin position="815"/>
        <end position="823"/>
    </location>
</feature>
<feature type="short sequence motif" description="Nuclear export signal" evidence="1">
    <location>
        <begin position="16"/>
        <end position="22"/>
    </location>
</feature>
<feature type="short sequence motif" description="Nuclear localization signal" evidence="1">
    <location>
        <begin position="26"/>
        <end position="32"/>
    </location>
</feature>
<feature type="short sequence motif" description="Tryptophan repeat motif" evidence="1">
    <location>
        <begin position="986"/>
        <end position="1002"/>
    </location>
</feature>
<feature type="active site" description="For protease activity; shared with dimeric partner" evidence="16">
    <location>
        <position position="514"/>
    </location>
</feature>
<feature type="binding site" evidence="1">
    <location>
        <position position="698"/>
    </location>
    <ligand>
        <name>Mg(2+)</name>
        <dbReference type="ChEBI" id="CHEBI:18420"/>
        <label>1</label>
        <note>catalytic; for reverse transcriptase activity</note>
    </ligand>
</feature>
<feature type="binding site" evidence="1">
    <location>
        <position position="773"/>
    </location>
    <ligand>
        <name>Mg(2+)</name>
        <dbReference type="ChEBI" id="CHEBI:18420"/>
        <label>1</label>
        <note>catalytic; for reverse transcriptase activity</note>
    </ligand>
</feature>
<feature type="binding site" evidence="1">
    <location>
        <position position="774"/>
    </location>
    <ligand>
        <name>Mg(2+)</name>
        <dbReference type="ChEBI" id="CHEBI:18420"/>
        <label>1</label>
        <note>catalytic; for reverse transcriptase activity</note>
    </ligand>
</feature>
<feature type="binding site" evidence="1">
    <location>
        <position position="1031"/>
    </location>
    <ligand>
        <name>Mg(2+)</name>
        <dbReference type="ChEBI" id="CHEBI:18420"/>
        <label>2</label>
        <note>catalytic; for RNase H activity</note>
    </ligand>
</feature>
<feature type="binding site" evidence="1">
    <location>
        <position position="1066"/>
    </location>
    <ligand>
        <name>Mg(2+)</name>
        <dbReference type="ChEBI" id="CHEBI:18420"/>
        <label>2</label>
        <note>catalytic; for RNase H activity</note>
    </ligand>
</feature>
<feature type="binding site" evidence="1">
    <location>
        <position position="1086"/>
    </location>
    <ligand>
        <name>Mg(2+)</name>
        <dbReference type="ChEBI" id="CHEBI:18420"/>
        <label>2</label>
        <note>catalytic; for RNase H activity</note>
    </ligand>
</feature>
<feature type="binding site" evidence="1">
    <location>
        <position position="1137"/>
    </location>
    <ligand>
        <name>Mg(2+)</name>
        <dbReference type="ChEBI" id="CHEBI:18420"/>
        <label>2</label>
        <note>catalytic; for RNase H activity</note>
    </ligand>
</feature>
<feature type="binding site" evidence="13">
    <location>
        <position position="1160"/>
    </location>
    <ligand>
        <name>Zn(2+)</name>
        <dbReference type="ChEBI" id="CHEBI:29105"/>
    </ligand>
</feature>
<feature type="binding site" evidence="13">
    <location>
        <position position="1164"/>
    </location>
    <ligand>
        <name>Zn(2+)</name>
        <dbReference type="ChEBI" id="CHEBI:29105"/>
    </ligand>
</feature>
<feature type="binding site" evidence="13">
    <location>
        <position position="1188"/>
    </location>
    <ligand>
        <name>Zn(2+)</name>
        <dbReference type="ChEBI" id="CHEBI:29105"/>
    </ligand>
</feature>
<feature type="binding site" evidence="13">
    <location>
        <position position="1191"/>
    </location>
    <ligand>
        <name>Zn(2+)</name>
        <dbReference type="ChEBI" id="CHEBI:29105"/>
    </ligand>
</feature>
<feature type="binding site" evidence="1">
    <location>
        <position position="1212"/>
    </location>
    <ligand>
        <name>Mg(2+)</name>
        <dbReference type="ChEBI" id="CHEBI:18420"/>
        <label>3</label>
        <note>catalytic; for integrase activity</note>
    </ligand>
</feature>
<feature type="binding site" evidence="1">
    <location>
        <position position="1264"/>
    </location>
    <ligand>
        <name>Mg(2+)</name>
        <dbReference type="ChEBI" id="CHEBI:18420"/>
        <label>3</label>
        <note>catalytic; for integrase activity</note>
    </ligand>
</feature>
<feature type="binding site" evidence="5">
    <location>
        <position position="1300"/>
    </location>
    <ligand>
        <name>Mg(2+)</name>
        <dbReference type="ChEBI" id="CHEBI:18420"/>
        <label>3</label>
        <note>catalytic; for integrase activity</note>
    </ligand>
</feature>
<feature type="site" description="Cleavage; by viral protease" evidence="1">
    <location>
        <begin position="132"/>
        <end position="133"/>
    </location>
</feature>
<feature type="site" description="Cis/trans isomerization of proline peptide bond; by human PPIA/CYPA" evidence="1">
    <location>
        <begin position="221"/>
        <end position="222"/>
    </location>
</feature>
<feature type="site" description="Cleavage; by viral protease" evidence="1">
    <location>
        <begin position="363"/>
        <end position="364"/>
    </location>
</feature>
<feature type="site" description="Cleavage; by viral protease" evidence="1">
    <location>
        <begin position="377"/>
        <end position="378"/>
    </location>
</feature>
<feature type="site" description="Cleavage; by viral protease" evidence="8">
    <location>
        <begin position="434"/>
        <end position="435"/>
    </location>
</feature>
<feature type="site" description="Cleavage; by viral protease" evidence="1">
    <location>
        <begin position="442"/>
        <end position="443"/>
    </location>
</feature>
<feature type="site" description="Cleavage; by viral protease" evidence="1">
    <location>
        <begin position="489"/>
        <end position="490"/>
    </location>
</feature>
<feature type="site" description="Cleavage; by viral protease" evidence="1">
    <location>
        <begin position="588"/>
        <end position="589"/>
    </location>
</feature>
<feature type="site" description="Essential for RT p66/p51 heterodimerization" evidence="1">
    <location>
        <position position="989"/>
    </location>
</feature>
<feature type="site" description="Essential for RT p66/p51 heterodimerization" evidence="1">
    <location>
        <position position="1002"/>
    </location>
</feature>
<feature type="site" description="Cleavage; by viral protease; partial" evidence="1">
    <location>
        <begin position="1028"/>
        <end position="1029"/>
    </location>
</feature>
<feature type="site" description="Cleavage; by viral protease" evidence="1">
    <location>
        <begin position="1148"/>
        <end position="1149"/>
    </location>
</feature>
<feature type="modified residue" description="Phosphotyrosine; by host" evidence="1">
    <location>
        <position position="132"/>
    </location>
</feature>
<feature type="lipid moiety-binding region" description="N-myristoyl glycine; by host" evidence="1">
    <location>
        <position position="2"/>
    </location>
</feature>
<feature type="strand" evidence="19">
    <location>
        <begin position="494"/>
        <end position="496"/>
    </location>
</feature>
<feature type="strand" evidence="19">
    <location>
        <begin position="499"/>
        <end position="504"/>
    </location>
</feature>
<feature type="strand" evidence="19">
    <location>
        <begin position="507"/>
        <end position="513"/>
    </location>
</feature>
<feature type="strand" evidence="19">
    <location>
        <begin position="521"/>
        <end position="524"/>
    </location>
</feature>
<feature type="strand" evidence="19">
    <location>
        <begin position="532"/>
        <end position="538"/>
    </location>
</feature>
<feature type="strand" evidence="19">
    <location>
        <begin position="541"/>
        <end position="555"/>
    </location>
</feature>
<feature type="strand" evidence="19">
    <location>
        <begin position="558"/>
        <end position="567"/>
    </location>
</feature>
<feature type="helix" evidence="19">
    <location>
        <begin position="576"/>
        <end position="579"/>
    </location>
</feature>
<feature type="turn" evidence="19">
    <location>
        <begin position="580"/>
        <end position="583"/>
    </location>
</feature>
<feature type="strand" evidence="19">
    <location>
        <begin position="585"/>
        <end position="587"/>
    </location>
</feature>
<proteinExistence type="evidence at protein level"/>
<sequence length="1436" mass="162118">MGARASVLSGGKLDKWEKIRLRPRGKKRYKLKHIVWASRELERFAVNPSLLETAEGCRQILGQLQPALQTGSEELKSLYNAVATLYCVHQNIEVRDTKEALDKIEEEQNKSKKKAQQAAADTGNGSQVSQNYPIVQNLQGQMVHQAISPRTLNAWVKVVEEKAFSPEVIPMFSALSEGATPQDLNTMLNTVGGHQAAMQMLKETINEEAAEWDRLHPVHAGPIAPGQMREPRGSDIAGTTSTLQEQIGWMTNNPPIPVGEIYKRWIILGLNKIVRMYSPISILDIRQGPKEPFRDYVDRFYKTLRAEQASQDVKNWMTETFLVQNANPDCKTILKALGPAATLEEMMTACQGVGGPSHKARILAEAMSQVTNSATIMLQKGNFRDQRKIVKCFNCGKVGHIAKNCRAPRKKGCWKCGKEGHQMKDCTNEGRQANFLRENLAFPQGKARELSSEQTRANSPTRRELQVWGRDNSLSEAGEDRQGTVSFSFPQITLWQRPIVTVKIGGQLKEALLDTGADDTVLEEMNLPGKWKPKMIGGIGGFIKVRQYDQILIEICGHKAIGTVLVGPTPVNIIGRNLLTQIGCTLNFPISPIETVPVKLKPGMDGPKVKQWPLTEEKIKALVEICTEMEKEGKISKIGPENPYNTPVFAIKKKDSTKWRKLVDFRELNKRTQDFWEVQLGIPHPAGLKKKKSVTVLDVGDAYFSVPLDKEFRKYTAFTIPSINNETPRIRYQYNVLPQGWKGSPAIFQSSMTKILEPFKKQNPEIVIYQYMDDLYVGSDLEIGQHRIKIEELREHLLKWGFTTPDKKHQKEPPFLWMGYELHPDKWTVQPIVLPEKDSWTVNDIQKLVGKLNWASQIYAGIKVKQLCKLLRGTKALTEVVQLTKEAELELAENREILKEPVHGVYYDPSKDLIAEIQKQGQGQWTYQIYQEPFKNLKTGKYARMRGAHTNDVKQLTEAVQKVATESIVIWGKTPKFKLPIQKETWEAWWTEYWQATWIPEWEFVNTPPLVKLWYQLEKEPIIGAETFYVDGAANRETKLGKAGYVTDRGRQKVVSLTDTTNQKTELQAIHLALQDSGLEVNIVTDSQYALGIIQAQPDKSESELVSQIIEQLIKKEKVYLAWVPAHKGIGGNEQVDRLVSTGIRKVLFLDGIDKAQDEHEKYHSNWRAMASDFNLPPVVAKEIVASCDKCQLKGEAMHGQVDCSPGIWQLDCTHLEGKIILVAVHVASGYIEAEVIPAETGQETAYFILKLAGRWPVKVIHTDNGSNFTSTTVKAACWWAGIKQEFGIPYNPQSQGVVESMNKQLKQIIGQVRDQAEHLKTAVQMAVFIHNFKRKGGIGGYSAGERIVDIIATDIQTKELQKQITKIQNFRVYYRDSRDPLWKGHAKLLWKGEGAVVIQDNSDIKVVPRRKAKIIRDYGKQMAGDDCVASRQDED</sequence>
<organism>
    <name type="scientific">Human immunodeficiency virus type 1 group M subtype B (isolate RF/HAT3)</name>
    <name type="common">HIV-1</name>
    <dbReference type="NCBI Taxonomy" id="11701"/>
    <lineage>
        <taxon>Viruses</taxon>
        <taxon>Riboviria</taxon>
        <taxon>Pararnavirae</taxon>
        <taxon>Artverviricota</taxon>
        <taxon>Revtraviricetes</taxon>
        <taxon>Ortervirales</taxon>
        <taxon>Retroviridae</taxon>
        <taxon>Orthoretrovirinae</taxon>
        <taxon>Lentivirus</taxon>
        <taxon>Human immunodeficiency virus type 1</taxon>
    </lineage>
</organism>
<comment type="function">
    <molecule>Gag-Pol polyprotein</molecule>
    <text evidence="1">Mediates, with Gag polyprotein, the essential events in virion assembly, including binding the plasma membrane, making the protein-protein interactions necessary to create spherical particles, recruiting the viral Env proteins, and packaging the genomic RNA via direct interactions with the RNA packaging sequence (Psi). Gag-Pol polyprotein may regulate its own translation, by the binding genomic RNA in the 5'-UTR. At low concentration, the polyprotein would promote translation, whereas at high concentration, the polyprotein would encapsidate genomic RNA and then shut off translation.</text>
</comment>
<comment type="function">
    <molecule>Matrix protein p17</molecule>
    <text evidence="7">Targets the polyprotein to the plasma membrane via a multipartite membrane-binding signal, that includes its myristoylated N-terminus. Matrix protein is part of the pre-integration complex. Implicated in the release from host cell mediated by Vpu. Binds to RNA.</text>
</comment>
<comment type="function">
    <molecule>Capsid protein p24</molecule>
    <text evidence="5 7">Forms the conical core that encapsulates the genomic RNA-nucleocapsid complex in the virion. Most core are conical, with only 7% tubular. The core is constituted by capsid protein hexamer subunits. The core is disassembled soon after virion entry (By similarity). Host restriction factors such as TRIM5-alpha or TRIMCyp bind retroviral capsids and cause premature capsid disassembly, leading to blocks in reverse transcription. Capsid restriction by TRIM5 is one of the factors which restricts HIV-1 to the human species. Host PIN1 apparently facilitates the virion uncoating. On the other hand, interactions with PDZD8 or CYPA stabilize the capsid.</text>
</comment>
<comment type="function">
    <molecule>Nucleocapsid protein p7</molecule>
    <text evidence="5">Encapsulates and protects viral dimeric unspliced genomic RNA (gRNA). Binds these RNAs through its zinc fingers. Acts as a nucleic acid chaperone which is involved in rearangement of nucleic acid secondary structure during gRNA retrotranscription. Also facilitates template switch leading to recombination. As part of the polyprotein, participates in gRNA dimerization, packaging, tRNA incorporation and virion assembly.</text>
</comment>
<comment type="function">
    <molecule>Protease</molecule>
    <text evidence="5 10">Aspartyl protease that mediates proteolytic cleavages of Gag and Gag-Pol polyproteins during or shortly after the release of the virion from the plasma membrane. Cleavages take place as an ordered, step-wise cascade to yield mature proteins. This process is called maturation. Displays maximal activity during the budding process just prior to particle release from the cell. Also cleaves Nef and Vif, probably concomitantly with viral structural proteins on maturation of virus particles. Hydrolyzes host EIF4GI and PABP1 in order to shut off the capped cellular mRNA translation. The resulting inhibition of cellular protein synthesis serves to ensure maximal viral gene expression and to evade host immune response. Also mediates cleavage of host YTHDF3. Mediates cleavage of host CARD8, thereby activating the CARD8 inflammasome, leading to the clearance of latent HIV-1 in patient CD4(+) T-cells after viral reactivation; in contrast, HIV-1 can evade CARD8-sensing when its protease remains inactive in infected cells prior to viral budding (By similarity).</text>
</comment>
<comment type="function">
    <molecule>Reverse transcriptase/ribonuclease H</molecule>
    <text evidence="5">Multifunctional enzyme that converts the viral RNA genome into dsDNA in the cytoplasm, shortly after virus entry into the cell. This enzyme displays a DNA polymerase activity that can copy either DNA or RNA templates, and a ribonuclease H (RNase H) activity that cleaves the RNA strand of RNA-DNA heteroduplexes in a partially processive 3' to 5' endonucleasic mode. Conversion of viral genomic RNA into dsDNA requires many steps. A tRNA(3)-Lys binds to the primer-binding site (PBS) situated at the 5'-end of the viral RNA. RT uses the 3' end of the tRNA primer to perform a short round of RNA-dependent minus-strand DNA synthesis. The reading proceeds through the U5 region and ends after the repeated (R) region which is present at both ends of viral RNA. The portion of the RNA-DNA heteroduplex is digested by the RNase H, resulting in a ssDNA product attached to the tRNA primer. This ssDNA/tRNA hybridizes with the identical R region situated at the 3' end of viral RNA. This template exchange, known as minus-strand DNA strong stop transfer, can be either intra- or intermolecular. RT uses the 3' end of this newly synthesized short ssDNA to perform the RNA-dependent minus-strand DNA synthesis of the whole template. RNase H digests the RNA template except for two polypurine tracts (PPTs) situated at the 5'-end and near the center of the genome. It is not clear if both polymerase and RNase H activities are simultaneous. RNase H probably can proceed both in a polymerase-dependent (RNA cut into small fragments by the same RT performing DNA synthesis) and a polymerase-independent mode (cleavage of remaining RNA fragments by free RTs). Secondly, RT performs DNA-directed plus-strand DNA synthesis using the PPTs that have not been removed by RNase H as primers. PPTs and tRNA primers are then removed by RNase H. The 3' and 5' ssDNA PBS regions hybridize to form a circular dsDNA intermediate. Strand displacement synthesis by RT to the PBS and PPT ends produces a blunt ended, linear dsDNA copy of the viral genome that includes long terminal repeats (LTRs) at both ends.</text>
</comment>
<comment type="function">
    <molecule>Integrase</molecule>
    <text evidence="5">Catalyzes viral DNA integration into the host chromosome, by performing a series of DNA cutting and joining reactions. This enzyme activity takes place after virion entry into a cell and reverse transcription of the RNA genome in dsDNA. The first step in the integration process is 3' processing. This step requires a complex comprising the viral genome, matrix protein, Vpr and integrase. This complex is called the pre-integration complex (PIC). The integrase protein removes 2 nucleotides from each 3' end of the viral DNA, leaving recessed CA OH's at the 3' ends. In the second step, the PIC enters cell nucleus. This process is mediated through integrase and Vpr proteins, and allows the virus to infect a non dividing cell. This ability to enter the nucleus is specific of lentiviruses, other retroviruses cannot and rely on cell division to access cell chromosomes. In the third step, termed strand transfer, the integrase protein joins the previously processed 3' ends to the 5' ends of strands of target cellular DNA at the site of integration. The 5'-ends are produced by integrase-catalyzed staggered cuts, 5 bp apart. A Y-shaped, gapped, recombination intermediate results, with the 5'-ends of the viral DNA strands and the 3' ends of target DNA strands remaining unjoined, flanking a gap of 5 bp. The last step is viral DNA integration into host chromosome. This involves host DNA repair synthesis in which the 5 bp gaps between the unjoined strands are filled in and then ligated. Since this process occurs at both cuts flanking the HIV genome, a 5 bp duplication of host DNA is produced at the ends of HIV-1 integration. Alternatively, Integrase may catalyze the excision of viral DNA just after strand transfer, this is termed disintegration.</text>
</comment>
<comment type="catalytic activity">
    <reaction evidence="10">
        <text>Specific for a P1 residue that is hydrophobic, and P1' variable, but often Pro.</text>
        <dbReference type="EC" id="3.4.23.16"/>
    </reaction>
</comment>
<comment type="catalytic activity">
    <reaction evidence="1">
        <text>Endohydrolysis of RNA in RNA/DNA hybrids. Three different cleavage modes: 1. sequence-specific internal cleavage of RNA. Human immunodeficiency virus type 1 and Moloney murine leukemia virus enzymes prefer to cleave the RNA strand one nucleotide away from the RNA-DNA junction. 2. RNA 5'-end directed cleavage 13-19 nucleotides from the RNA end. 3. DNA 3'-end directed cleavage 15-20 nucleotides away from the primer terminus.</text>
        <dbReference type="EC" id="3.1.26.13"/>
    </reaction>
</comment>
<comment type="catalytic activity">
    <reaction evidence="1">
        <text>3'-end directed exonucleolytic cleavage of viral RNA-DNA hybrid.</text>
        <dbReference type="EC" id="3.1.13.2"/>
    </reaction>
</comment>
<comment type="catalytic activity">
    <reaction evidence="11">
        <text>DNA(n) + a 2'-deoxyribonucleoside 5'-triphosphate = DNA(n+1) + diphosphate</text>
        <dbReference type="Rhea" id="RHEA:22508"/>
        <dbReference type="Rhea" id="RHEA-COMP:17339"/>
        <dbReference type="Rhea" id="RHEA-COMP:17340"/>
        <dbReference type="ChEBI" id="CHEBI:33019"/>
        <dbReference type="ChEBI" id="CHEBI:61560"/>
        <dbReference type="ChEBI" id="CHEBI:173112"/>
        <dbReference type="EC" id="2.7.7.49"/>
    </reaction>
</comment>
<comment type="catalytic activity">
    <reaction evidence="11">
        <text>DNA(n) + a 2'-deoxyribonucleoside 5'-triphosphate = DNA(n+1) + diphosphate</text>
        <dbReference type="Rhea" id="RHEA:22508"/>
        <dbReference type="Rhea" id="RHEA-COMP:17339"/>
        <dbReference type="Rhea" id="RHEA-COMP:17340"/>
        <dbReference type="ChEBI" id="CHEBI:33019"/>
        <dbReference type="ChEBI" id="CHEBI:61560"/>
        <dbReference type="ChEBI" id="CHEBI:173112"/>
        <dbReference type="EC" id="2.7.7.7"/>
    </reaction>
</comment>
<comment type="cofactor">
    <cofactor evidence="1">
        <name>Mg(2+)</name>
        <dbReference type="ChEBI" id="CHEBI:18420"/>
    </cofactor>
    <text evidence="1">Binds 2 magnesium ions for reverse transcriptase polymerase activity.</text>
</comment>
<comment type="cofactor">
    <cofactor evidence="1">
        <name>Mg(2+)</name>
        <dbReference type="ChEBI" id="CHEBI:18420"/>
    </cofactor>
    <text evidence="1">Binds 2 magnesium ions for ribonuclease H (RNase H) activity. Substrate-binding is a precondition for magnesium binding.</text>
</comment>
<comment type="cofactor">
    <cofactor evidence="1">
        <name>Mg(2+)</name>
        <dbReference type="ChEBI" id="CHEBI:18420"/>
    </cofactor>
    <text evidence="1">Magnesium ions are required for integrase activity. Binds at least 1, maybe 2 magnesium ions.</text>
</comment>
<comment type="activity regulation">
    <text evidence="1">Protease: The viral protease is inhibited by many synthetic protease inhibitors (PIs), such as amprenavir, atazanavir, indinavir, loprinavir, nelfinavir, ritonavir and saquinavir. Use of protease inhibitors in tritherapy regimens permit more ambitious therapeutic strategies. Reverse transcriptase/ribonuclease H: RT can be inhibited either by nucleoside RT inhibitors (NRTIs) or by non nucleoside RT inhibitors (NNRTIs). NRTIs act as chain terminators, whereas NNRTIs inhibit DNA polymerization by binding a small hydrophobic pocket near the RT active site and inducing an allosteric change in this region. Classical NRTIs are abacavir, adefovir (PMEA), didanosine (ddI), lamivudine (3TC), stavudine (d4T), tenofovir (PMPA), zalcitabine (ddC), and zidovudine (AZT). Classical NNRTIs are atevirdine (BHAP U-87201E), delavirdine, efavirenz (DMP-266), emivirine (I-EBU), and nevirapine (BI-RG-587). The tritherapies used as a basic effective treatment of AIDS associate two NRTIs and one NNRTI.</text>
</comment>
<comment type="subunit">
    <molecule>Matrix protein p17</molecule>
    <text evidence="5 7">Homotrimer; further assembles as hexamers of trimers (By similarity). Interacts with gp41 (via C-terminus) (By similarity). Interacts with host CALM1; this interaction induces a conformational change in the Matrix protein, triggering exposure of the myristate group (By similarity). Interacts with host AP3D1; this interaction allows the polyprotein trafficking to multivesicular bodies during virus assembly (By similarity). Part of the pre-integration complex (PIC) which is composed of viral genome, matrix protein, Vpr and integrase (By similarity).</text>
</comment>
<comment type="subunit">
    <molecule>Capsid protein p24</molecule>
    <text evidence="5 7">Homodimer; the homodimer further multimerizes as homohexamers or homopentamers. Interacts with human PPIA/CYPA (By similarity); This interaction stabilizes the capsid. Interacts with human NUP153 (By similarity). Interacts with host PDZD8; this interaction stabilizes the capsid (By similarity). Interacts with monkey TRIM5; this interaction destabilizes the capsid (By similarity).</text>
</comment>
<comment type="subunit">
    <molecule>Protease</molecule>
    <text evidence="5 7">Homodimer, whose active site consists of two apposed aspartic acid residues.</text>
</comment>
<comment type="subunit">
    <molecule>Reverse transcriptase/ribonuclease H</molecule>
    <text evidence="3">Heterodimer of p66 RT and p51 RT (RT p66/p51) (By similarity). Heterodimerization of RT is essential for DNA polymerase activity (By similarity). The overall folding of the subdomains is similar in p66 RT and p51 RT but the spatial arrangements of the subdomains are dramatically different (By similarity).</text>
</comment>
<comment type="subunit">
    <molecule>Integrase</molecule>
    <text evidence="4 5 7">Homotetramer; may further associate as a homohexadecamer (By similarity). Part of the pre-integration complex (PIC) which is composed of viral genome, matrix protein, Vpr and integrase. Interacts with human SMARCB1/INI1 and human PSIP1/LEDGF isoform 1. Interacts with human KPNA3; this interaction might play a role in nuclear import of the pre-integration complex (By similarity). Interacts with human NUP153; this interaction might play a role in nuclear import of the pre-integration complex (By similarity).</text>
</comment>
<comment type="subcellular location">
    <molecule>Gag-Pol polyprotein</molecule>
    <subcellularLocation>
        <location>Host cell membrane</location>
        <topology>Lipid-anchor</topology>
    </subcellularLocation>
    <subcellularLocation>
        <location>Host endosome</location>
        <location>Host multivesicular body</location>
    </subcellularLocation>
    <text evidence="7">These locations are linked to virus assembly sites. The main location is the cell membrane, but under some circumstances, late endosomal compartments can serve as productive sites for virion assembly.</text>
</comment>
<comment type="subcellular location">
    <molecule>Matrix protein p17</molecule>
    <subcellularLocation>
        <location>Virion membrane</location>
        <topology evidence="18">Lipid-anchor</topology>
    </subcellularLocation>
    <subcellularLocation>
        <location evidence="1">Host nucleus</location>
    </subcellularLocation>
    <subcellularLocation>
        <location evidence="1">Host cytoplasm</location>
    </subcellularLocation>
</comment>
<comment type="subcellular location">
    <molecule>Capsid protein p24</molecule>
    <subcellularLocation>
        <location evidence="18">Virion</location>
    </subcellularLocation>
</comment>
<comment type="subcellular location">
    <molecule>Nucleocapsid protein p7</molecule>
    <subcellularLocation>
        <location evidence="18">Virion</location>
    </subcellularLocation>
</comment>
<comment type="subcellular location">
    <molecule>Reverse transcriptase/ribonuclease H</molecule>
    <subcellularLocation>
        <location evidence="18">Virion</location>
    </subcellularLocation>
</comment>
<comment type="subcellular location">
    <molecule>Integrase</molecule>
    <subcellularLocation>
        <location evidence="18">Virion</location>
    </subcellularLocation>
    <subcellularLocation>
        <location evidence="18">Host nucleus</location>
    </subcellularLocation>
    <subcellularLocation>
        <location evidence="18">Host cytoplasm</location>
    </subcellularLocation>
    <text evidence="18">Nuclear at initial phase, cytoplasmic at assembly.</text>
</comment>
<comment type="alternative products">
    <event type="ribosomal frameshifting"/>
    <isoform>
        <id>P05959-1</id>
        <name>Gag-Pol polyprotein</name>
        <sequence type="displayed"/>
    </isoform>
    <isoform>
        <id>P05890-1</id>
        <name>Gag polyprotein</name>
        <sequence type="external"/>
    </isoform>
    <text>Translation results in the formation of the Gag polyprotein most of the time. Ribosomal frameshifting at the gag-pol genes boundary occurs at low frequency and produces the Gag-Pol polyprotein. This strategy of translation probably allows the virus to modulate the quantity of each viral protein. Maintenance of a correct Gag to Gag-Pol ratio is essential for RNA dimerization and viral infectivity.</text>
</comment>
<comment type="domain">
    <molecule>Reverse transcriptase/ribonuclease H</molecule>
    <text evidence="1">RT is structured in five subdomains: finger, palm, thumb, connection and RNase H. Within the palm subdomain, the 'primer grip' region is thought to be involved in the positioning of the primer terminus for accommodating the incoming nucleotide. The RNase H domain stabilizes the association of RT with primer-template.</text>
</comment>
<comment type="domain">
    <molecule>Reverse transcriptase/ribonuclease H</molecule>
    <text evidence="1">The tryptophan repeat motif is involved in RT p66/p51 dimerization (By similarity).</text>
</comment>
<comment type="domain">
    <molecule>Integrase</molecule>
    <text evidence="1">The core domain contains the D-x(n)-D-x(35)-E motif, named for the phylogenetically conserved glutamic acid and aspartic acid residues and the invariant 35 amino acid spacing between the second and third acidic residues. Each acidic residue of the D,D(35)E motif is independently essential for the 3'-processing and strand transfer activities of purified integrase protein.</text>
</comment>
<comment type="PTM">
    <molecule>Gag-Pol polyprotein</molecule>
    <text evidence="5 11">Specific enzymatic cleavages by the viral protease yield mature proteins. The protease is released by autocatalytic cleavage. The polyprotein is cleaved during and after budding, this process is termed maturation. Proteolytic cleavage of p66 RT removes the RNase H domain to yield the p51 RT subunit. Nucleocapsid protein p7 might be further cleaved after virus entry.</text>
</comment>
<comment type="PTM">
    <molecule>Matrix protein p17</molecule>
    <text evidence="5">Tyrosine phosphorylated presumably in the virion by a host kinase. Phosphorylation is apparently not a major regulator of membrane association.</text>
</comment>
<comment type="PTM">
    <molecule>Capsid protein p24</molecule>
    <text evidence="6">Phosphorylated possibly by host MAPK1; this phosphorylation is necessary for Pin1-mediated virion uncoating.</text>
</comment>
<comment type="PTM">
    <molecule>Nucleocapsid protein p7</molecule>
    <text evidence="2">Methylated by host PRMT6, impairing its function by reducing RNA annealing and the initiation of reverse transcription.</text>
</comment>
<comment type="miscellaneous">
    <molecule>Reverse transcriptase/ribonuclease H</molecule>
    <text evidence="1">Error-prone enzyme that lacks a proof-reading function. High mutations rate is a direct consequence of this characteristic. RT also displays frequent template switching leading to high recombination rate. Recombination mostly occurs between homologous regions of the two copackaged RNA genomes. If these two RNA molecules derive from different viral strains, reverse transcription will give rise to highly recombinated proviral DNAs.</text>
</comment>
<comment type="miscellaneous">
    <text>HIV-1 lineages are divided in three main groups, M (for Major), O (for Outlier), and N (for New, or Non-M, Non-O). The vast majority of strains found worldwide belong to the group M. Group O seems to be endemic to and largely confined to Cameroon and neighboring countries in West Central Africa, where these viruses represent a small minority of HIV-1 strains. The group N is represented by a limited number of isolates from Cameroonian persons. The group M is further subdivided in 9 clades or subtypes (A to D, F to H, J and K).</text>
</comment>
<comment type="miscellaneous">
    <text>Resistance to inhibitors associated with mutations are observed both in viral protease and in reverse transcriptase. Most of the time, single mutations confer only a modest reduction in drug susceptibility. Combination of several mutations is usually required to develop a high-level drug resistance. These mutations are predominantly found in clade B viruses and not in other genotypes. They are listed in the clade B representative isolate HXB2 (AC P04585).</text>
</comment>
<comment type="miscellaneous">
    <molecule>Isoform Gag-Pol polyprotein</molecule>
    <text>Produced by -1 ribosomal frameshifting.</text>
</comment>
<comment type="online information" name="HIV drug resistance mutations">
    <link uri="https://www.iasusa.org/hiv-drug-resistance/hiv-drug-resistance-mutations/"/>
</comment>
<comment type="online information" name="hivdb">
    <link uri="https://hivdb.stanford.edu"/>
    <text>HIV drug resistance database</text>
</comment>
<protein>
    <recommendedName>
        <fullName>Gag-Pol polyprotein</fullName>
    </recommendedName>
    <alternativeName>
        <fullName>Pr160Gag-Pol</fullName>
    </alternativeName>
    <component>
        <recommendedName>
            <fullName>Matrix protein p17</fullName>
            <shortName>MA</shortName>
        </recommendedName>
    </component>
    <component>
        <recommendedName>
            <fullName>Capsid protein p24</fullName>
            <shortName>CA</shortName>
        </recommendedName>
    </component>
    <component>
        <recommendedName>
            <fullName evidence="7">Spacer peptide 1</fullName>
            <shortName>SP1</shortName>
        </recommendedName>
        <alternativeName>
            <fullName>p2</fullName>
        </alternativeName>
    </component>
    <component>
        <recommendedName>
            <fullName>Nucleocapsid protein p7</fullName>
            <shortName>NC</shortName>
        </recommendedName>
    </component>
    <component>
        <recommendedName>
            <fullName>Transframe peptide</fullName>
            <shortName>TF</shortName>
        </recommendedName>
    </component>
    <component>
        <recommendedName>
            <fullName>p6-pol</fullName>
            <shortName>p6*</shortName>
        </recommendedName>
    </component>
    <component>
        <recommendedName>
            <fullName>Protease</fullName>
            <ecNumber>3.4.23.16</ecNumber>
        </recommendedName>
        <alternativeName>
            <fullName>PR</fullName>
        </alternativeName>
        <alternativeName>
            <fullName>Retropepsin</fullName>
        </alternativeName>
    </component>
    <component>
        <recommendedName>
            <fullName>Reverse transcriptase/ribonuclease H</fullName>
            <ecNumber>2.7.7.49</ecNumber>
            <ecNumber>2.7.7.7</ecNumber>
            <ecNumber>3.1.26.13</ecNumber>
        </recommendedName>
        <alternativeName>
            <fullName>Exoribonuclease H</fullName>
            <ecNumber>3.1.13.2</ecNumber>
        </alternativeName>
        <alternativeName>
            <fullName>p66 RT</fullName>
        </alternativeName>
    </component>
    <component>
        <recommendedName>
            <fullName>p51 RT</fullName>
        </recommendedName>
    </component>
    <component>
        <recommendedName>
            <fullName>p15</fullName>
        </recommendedName>
    </component>
    <component>
        <recommendedName>
            <fullName>Integrase</fullName>
            <shortName>IN</shortName>
            <ecNumber evidence="5">2.7.7.-</ecNumber>
            <ecNumber evidence="5">3.1.-.-</ecNumber>
        </recommendedName>
    </component>
</protein>
<evidence type="ECO:0000250" key="1"/>
<evidence type="ECO:0000250" key="2">
    <source>
        <dbReference type="UniProtKB" id="P03347"/>
    </source>
</evidence>
<evidence type="ECO:0000250" key="3">
    <source>
        <dbReference type="UniProtKB" id="P03366"/>
    </source>
</evidence>
<evidence type="ECO:0000250" key="4">
    <source>
        <dbReference type="UniProtKB" id="P03367"/>
    </source>
</evidence>
<evidence type="ECO:0000250" key="5">
    <source>
        <dbReference type="UniProtKB" id="P04585"/>
    </source>
</evidence>
<evidence type="ECO:0000250" key="6">
    <source>
        <dbReference type="UniProtKB" id="P12493"/>
    </source>
</evidence>
<evidence type="ECO:0000250" key="7">
    <source>
        <dbReference type="UniProtKB" id="P12497"/>
    </source>
</evidence>
<evidence type="ECO:0000255" key="8"/>
<evidence type="ECO:0000255" key="9">
    <source>
        <dbReference type="PROSITE-ProRule" id="PRU00047"/>
    </source>
</evidence>
<evidence type="ECO:0000255" key="10">
    <source>
        <dbReference type="PROSITE-ProRule" id="PRU00275"/>
    </source>
</evidence>
<evidence type="ECO:0000255" key="11">
    <source>
        <dbReference type="PROSITE-ProRule" id="PRU00405"/>
    </source>
</evidence>
<evidence type="ECO:0000255" key="12">
    <source>
        <dbReference type="PROSITE-ProRule" id="PRU00408"/>
    </source>
</evidence>
<evidence type="ECO:0000255" key="13">
    <source>
        <dbReference type="PROSITE-ProRule" id="PRU00450"/>
    </source>
</evidence>
<evidence type="ECO:0000255" key="14">
    <source>
        <dbReference type="PROSITE-ProRule" id="PRU00457"/>
    </source>
</evidence>
<evidence type="ECO:0000255" key="15">
    <source>
        <dbReference type="PROSITE-ProRule" id="PRU00506"/>
    </source>
</evidence>
<evidence type="ECO:0000255" key="16">
    <source>
        <dbReference type="PROSITE-ProRule" id="PRU10094"/>
    </source>
</evidence>
<evidence type="ECO:0000256" key="17">
    <source>
        <dbReference type="SAM" id="MobiDB-lite"/>
    </source>
</evidence>
<evidence type="ECO:0000305" key="18"/>
<evidence type="ECO:0007829" key="19">
    <source>
        <dbReference type="PDB" id="2FXE"/>
    </source>
</evidence>
<gene>
    <name type="primary">gag-pol</name>
</gene>
<reference key="1">
    <citation type="journal article" date="1986" name="Cell">
        <title>Identification and characterization of conserved and variable regions in the envelope gene of HTLV-III/LAV, the retrovirus of AIDS.</title>
        <authorList>
            <person name="Starcich B.R."/>
            <person name="Hahn B.H."/>
            <person name="Shaw G.M."/>
            <person name="McNeely P.D."/>
            <person name="Modrow S."/>
            <person name="Wolf H."/>
            <person name="Parks E.S."/>
            <person name="Parks W.P."/>
            <person name="Josephs S.F."/>
            <person name="Gallo R.C."/>
            <person name="Wong-Staal F."/>
        </authorList>
    </citation>
    <scope>NUCLEOTIDE SEQUENCE [GENOMIC RNA]</scope>
</reference>
<reference key="2">
    <citation type="journal article" date="1996" name="Curr. Top. Microbiol. Immunol.">
        <title>Proteolytic processing and particle maturation.</title>
        <authorList>
            <person name="Vogt V.M."/>
        </authorList>
    </citation>
    <scope>REVIEW</scope>
</reference>
<reference key="3">
    <citation type="journal article" date="1999" name="J. Mol. Biol.">
        <title>Structural biology of HIV.</title>
        <authorList>
            <person name="Turner B.G."/>
            <person name="Summers M.F."/>
        </authorList>
    </citation>
    <scope>REVIEW</scope>
</reference>
<reference key="4">
    <citation type="journal article" date="2001" name="Annu. Rev. Genet.">
        <title>Mechanisms of retroviral recombination.</title>
        <authorList>
            <person name="Negroni M."/>
            <person name="Buc H."/>
        </authorList>
    </citation>
    <scope>REVIEW</scope>
</reference>
<reference key="5">
    <citation type="journal article" date="2002" name="Genome Biol.">
        <title>Retroviral proteases.</title>
        <authorList>
            <person name="Dunn B.M."/>
            <person name="Goodenow M.M."/>
            <person name="Gustchina A."/>
            <person name="Wlodawer A."/>
        </authorList>
    </citation>
    <scope>REVIEW</scope>
</reference>
<reference key="6">
    <citation type="journal article" date="2003" name="Biochim. Biophys. Acta">
        <title>Role of HIV-1 Gag domains in viral assembly.</title>
        <authorList>
            <person name="Scarlata S."/>
            <person name="Carter C."/>
        </authorList>
    </citation>
    <scope>REVIEW</scope>
</reference>
<organismHost>
    <name type="scientific">Homo sapiens</name>
    <name type="common">Human</name>
    <dbReference type="NCBI Taxonomy" id="9606"/>
</organismHost>
<dbReference type="EC" id="3.4.23.16"/>
<dbReference type="EC" id="2.7.7.49"/>
<dbReference type="EC" id="2.7.7.7"/>
<dbReference type="EC" id="3.1.26.13"/>
<dbReference type="EC" id="3.1.13.2"/>
<dbReference type="EC" id="2.7.7.-" evidence="5"/>
<dbReference type="EC" id="3.1.-.-" evidence="5"/>
<dbReference type="EMBL" id="M17451">
    <property type="protein sequence ID" value="AAA45053.1"/>
    <property type="status" value="ALT_SEQ"/>
    <property type="molecule type" value="Genomic_RNA"/>
</dbReference>
<dbReference type="PDB" id="2FXE">
    <property type="method" value="X-ray"/>
    <property type="resolution" value="1.80 A"/>
    <property type="chains" value="A/B=490-588"/>
</dbReference>
<dbReference type="PDBsum" id="2FXE"/>
<dbReference type="SMR" id="P05959"/>
<dbReference type="BindingDB" id="P05959"/>
<dbReference type="MEROPS" id="A02.001"/>
<dbReference type="EvolutionaryTrace" id="P05959"/>
<dbReference type="PRO" id="PR:P05959"/>
<dbReference type="Proteomes" id="UP000007699">
    <property type="component" value="Segment"/>
</dbReference>
<dbReference type="GO" id="GO:0043657">
    <property type="term" value="C:host cell"/>
    <property type="evidence" value="ECO:0007669"/>
    <property type="project" value="GOC"/>
</dbReference>
<dbReference type="GO" id="GO:0042025">
    <property type="term" value="C:host cell nucleus"/>
    <property type="evidence" value="ECO:0007669"/>
    <property type="project" value="UniProtKB-SubCell"/>
</dbReference>
<dbReference type="GO" id="GO:0020002">
    <property type="term" value="C:host cell plasma membrane"/>
    <property type="evidence" value="ECO:0007669"/>
    <property type="project" value="UniProtKB-SubCell"/>
</dbReference>
<dbReference type="GO" id="GO:0072494">
    <property type="term" value="C:host multivesicular body"/>
    <property type="evidence" value="ECO:0007669"/>
    <property type="project" value="UniProtKB-SubCell"/>
</dbReference>
<dbReference type="GO" id="GO:0016020">
    <property type="term" value="C:membrane"/>
    <property type="evidence" value="ECO:0007669"/>
    <property type="project" value="UniProtKB-KW"/>
</dbReference>
<dbReference type="GO" id="GO:0019013">
    <property type="term" value="C:viral nucleocapsid"/>
    <property type="evidence" value="ECO:0007669"/>
    <property type="project" value="UniProtKB-KW"/>
</dbReference>
<dbReference type="GO" id="GO:0055036">
    <property type="term" value="C:virion membrane"/>
    <property type="evidence" value="ECO:0007669"/>
    <property type="project" value="UniProtKB-SubCell"/>
</dbReference>
<dbReference type="GO" id="GO:0004190">
    <property type="term" value="F:aspartic-type endopeptidase activity"/>
    <property type="evidence" value="ECO:0007669"/>
    <property type="project" value="UniProtKB-KW"/>
</dbReference>
<dbReference type="GO" id="GO:0003677">
    <property type="term" value="F:DNA binding"/>
    <property type="evidence" value="ECO:0007669"/>
    <property type="project" value="UniProtKB-KW"/>
</dbReference>
<dbReference type="GO" id="GO:0003887">
    <property type="term" value="F:DNA-directed DNA polymerase activity"/>
    <property type="evidence" value="ECO:0007669"/>
    <property type="project" value="UniProtKB-KW"/>
</dbReference>
<dbReference type="GO" id="GO:0004533">
    <property type="term" value="F:exoribonuclease H activity"/>
    <property type="evidence" value="ECO:0007669"/>
    <property type="project" value="UniProtKB-EC"/>
</dbReference>
<dbReference type="GO" id="GO:0008289">
    <property type="term" value="F:lipid binding"/>
    <property type="evidence" value="ECO:0007669"/>
    <property type="project" value="UniProtKB-KW"/>
</dbReference>
<dbReference type="GO" id="GO:0035613">
    <property type="term" value="F:RNA stem-loop binding"/>
    <property type="evidence" value="ECO:0007669"/>
    <property type="project" value="TreeGrafter"/>
</dbReference>
<dbReference type="GO" id="GO:0003964">
    <property type="term" value="F:RNA-directed DNA polymerase activity"/>
    <property type="evidence" value="ECO:0007669"/>
    <property type="project" value="UniProtKB-KW"/>
</dbReference>
<dbReference type="GO" id="GO:0004523">
    <property type="term" value="F:RNA-DNA hybrid ribonuclease activity"/>
    <property type="evidence" value="ECO:0007669"/>
    <property type="project" value="InterPro"/>
</dbReference>
<dbReference type="GO" id="GO:0005198">
    <property type="term" value="F:structural molecule activity"/>
    <property type="evidence" value="ECO:0007669"/>
    <property type="project" value="InterPro"/>
</dbReference>
<dbReference type="GO" id="GO:0008270">
    <property type="term" value="F:zinc ion binding"/>
    <property type="evidence" value="ECO:0007669"/>
    <property type="project" value="UniProtKB-KW"/>
</dbReference>
<dbReference type="GO" id="GO:0015074">
    <property type="term" value="P:DNA integration"/>
    <property type="evidence" value="ECO:0007669"/>
    <property type="project" value="UniProtKB-KW"/>
</dbReference>
<dbReference type="GO" id="GO:0006310">
    <property type="term" value="P:DNA recombination"/>
    <property type="evidence" value="ECO:0007669"/>
    <property type="project" value="UniProtKB-KW"/>
</dbReference>
<dbReference type="GO" id="GO:0075713">
    <property type="term" value="P:establishment of integrated proviral latency"/>
    <property type="evidence" value="ECO:0007669"/>
    <property type="project" value="UniProtKB-KW"/>
</dbReference>
<dbReference type="GO" id="GO:0006508">
    <property type="term" value="P:proteolysis"/>
    <property type="evidence" value="ECO:0007669"/>
    <property type="project" value="UniProtKB-KW"/>
</dbReference>
<dbReference type="GO" id="GO:0046718">
    <property type="term" value="P:symbiont entry into host cell"/>
    <property type="evidence" value="ECO:0007669"/>
    <property type="project" value="UniProtKB-KW"/>
</dbReference>
<dbReference type="GO" id="GO:0052151">
    <property type="term" value="P:symbiont-mediated activation of host apoptosis"/>
    <property type="evidence" value="ECO:0007669"/>
    <property type="project" value="UniProtKB-KW"/>
</dbReference>
<dbReference type="GO" id="GO:0039657">
    <property type="term" value="P:symbiont-mediated suppression of host gene expression"/>
    <property type="evidence" value="ECO:0007669"/>
    <property type="project" value="UniProtKB-KW"/>
</dbReference>
<dbReference type="GO" id="GO:0044826">
    <property type="term" value="P:viral genome integration into host DNA"/>
    <property type="evidence" value="ECO:0007669"/>
    <property type="project" value="UniProtKB-KW"/>
</dbReference>
<dbReference type="GO" id="GO:0075732">
    <property type="term" value="P:viral penetration into host nucleus"/>
    <property type="evidence" value="ECO:0007669"/>
    <property type="project" value="UniProtKB-KW"/>
</dbReference>
<dbReference type="GO" id="GO:0075523">
    <property type="term" value="P:viral translational frameshifting"/>
    <property type="evidence" value="ECO:0007669"/>
    <property type="project" value="UniProtKB-KW"/>
</dbReference>
<dbReference type="CDD" id="cd05482">
    <property type="entry name" value="HIV_retropepsin_like"/>
    <property type="match status" value="1"/>
</dbReference>
<dbReference type="CDD" id="cd01645">
    <property type="entry name" value="RT_Rtv"/>
    <property type="match status" value="1"/>
</dbReference>
<dbReference type="FunFam" id="1.10.1200.30:FF:000001">
    <property type="entry name" value="Gag polyprotein"/>
    <property type="match status" value="1"/>
</dbReference>
<dbReference type="FunFam" id="1.10.150.90:FF:000001">
    <property type="entry name" value="Gag polyprotein"/>
    <property type="match status" value="1"/>
</dbReference>
<dbReference type="FunFam" id="1.10.375.10:FF:000001">
    <property type="entry name" value="Gag polyprotein"/>
    <property type="match status" value="1"/>
</dbReference>
<dbReference type="FunFam" id="2.40.70.10:FF:000001">
    <property type="entry name" value="Gag-Pol polyprotein"/>
    <property type="match status" value="1"/>
</dbReference>
<dbReference type="FunFam" id="3.30.420.10:FF:000025">
    <property type="entry name" value="Gag-Pol polyprotein"/>
    <property type="match status" value="1"/>
</dbReference>
<dbReference type="FunFam" id="2.30.30.10:FF:000001">
    <property type="entry name" value="POL polyprotein"/>
    <property type="match status" value="1"/>
</dbReference>
<dbReference type="FunFam" id="3.30.420.10:FF:000017">
    <property type="entry name" value="POL polyprotein"/>
    <property type="match status" value="1"/>
</dbReference>
<dbReference type="FunFam" id="3.30.70.270:FF:000016">
    <property type="entry name" value="POL polyprotein"/>
    <property type="match status" value="1"/>
</dbReference>
<dbReference type="Gene3D" id="1.10.10.200">
    <property type="match status" value="1"/>
</dbReference>
<dbReference type="Gene3D" id="1.10.1200.30">
    <property type="match status" value="1"/>
</dbReference>
<dbReference type="Gene3D" id="3.30.70.270">
    <property type="match status" value="3"/>
</dbReference>
<dbReference type="Gene3D" id="2.40.70.10">
    <property type="entry name" value="Acid Proteases"/>
    <property type="match status" value="1"/>
</dbReference>
<dbReference type="Gene3D" id="3.10.10.10">
    <property type="entry name" value="HIV Type 1 Reverse Transcriptase, subunit A, domain 1"/>
    <property type="match status" value="1"/>
</dbReference>
<dbReference type="Gene3D" id="1.10.375.10">
    <property type="entry name" value="Human Immunodeficiency Virus Type 1 Capsid Protein"/>
    <property type="match status" value="1"/>
</dbReference>
<dbReference type="Gene3D" id="1.10.150.90">
    <property type="entry name" value="Immunodeficiency lentiviruses, gag gene matrix protein p17"/>
    <property type="match status" value="1"/>
</dbReference>
<dbReference type="Gene3D" id="2.30.30.10">
    <property type="entry name" value="Integrase, C-terminal domain superfamily, retroviral"/>
    <property type="match status" value="1"/>
</dbReference>
<dbReference type="Gene3D" id="3.30.420.10">
    <property type="entry name" value="Ribonuclease H-like superfamily/Ribonuclease H"/>
    <property type="match status" value="2"/>
</dbReference>
<dbReference type="Gene3D" id="1.20.5.760">
    <property type="entry name" value="Single helix bin"/>
    <property type="match status" value="1"/>
</dbReference>
<dbReference type="Gene3D" id="4.10.60.10">
    <property type="entry name" value="Zinc finger, CCHC-type"/>
    <property type="match status" value="1"/>
</dbReference>
<dbReference type="InterPro" id="IPR001969">
    <property type="entry name" value="Aspartic_peptidase_AS"/>
</dbReference>
<dbReference type="InterPro" id="IPR043502">
    <property type="entry name" value="DNA/RNA_pol_sf"/>
</dbReference>
<dbReference type="InterPro" id="IPR045345">
    <property type="entry name" value="Gag_p24_C"/>
</dbReference>
<dbReference type="InterPro" id="IPR017856">
    <property type="entry name" value="Integrase-like_N"/>
</dbReference>
<dbReference type="InterPro" id="IPR036862">
    <property type="entry name" value="Integrase_C_dom_sf_retrovir"/>
</dbReference>
<dbReference type="InterPro" id="IPR001037">
    <property type="entry name" value="Integrase_C_retrovir"/>
</dbReference>
<dbReference type="InterPro" id="IPR001584">
    <property type="entry name" value="Integrase_cat-core"/>
</dbReference>
<dbReference type="InterPro" id="IPR003308">
    <property type="entry name" value="Integrase_Zn-bd_dom_N"/>
</dbReference>
<dbReference type="InterPro" id="IPR000071">
    <property type="entry name" value="Lentvrl_matrix_N"/>
</dbReference>
<dbReference type="InterPro" id="IPR012344">
    <property type="entry name" value="Matrix_HIV/RSV_N"/>
</dbReference>
<dbReference type="InterPro" id="IPR001995">
    <property type="entry name" value="Peptidase_A2_cat"/>
</dbReference>
<dbReference type="InterPro" id="IPR021109">
    <property type="entry name" value="Peptidase_aspartic_dom_sf"/>
</dbReference>
<dbReference type="InterPro" id="IPR034170">
    <property type="entry name" value="Retropepsin-like_cat_dom"/>
</dbReference>
<dbReference type="InterPro" id="IPR018061">
    <property type="entry name" value="Retropepsins"/>
</dbReference>
<dbReference type="InterPro" id="IPR008916">
    <property type="entry name" value="Retrov_capsid_C"/>
</dbReference>
<dbReference type="InterPro" id="IPR008919">
    <property type="entry name" value="Retrov_capsid_N"/>
</dbReference>
<dbReference type="InterPro" id="IPR010999">
    <property type="entry name" value="Retrovr_matrix"/>
</dbReference>
<dbReference type="InterPro" id="IPR043128">
    <property type="entry name" value="Rev_trsase/Diguanyl_cyclase"/>
</dbReference>
<dbReference type="InterPro" id="IPR012337">
    <property type="entry name" value="RNaseH-like_sf"/>
</dbReference>
<dbReference type="InterPro" id="IPR002156">
    <property type="entry name" value="RNaseH_domain"/>
</dbReference>
<dbReference type="InterPro" id="IPR036397">
    <property type="entry name" value="RNaseH_sf"/>
</dbReference>
<dbReference type="InterPro" id="IPR000477">
    <property type="entry name" value="RT_dom"/>
</dbReference>
<dbReference type="InterPro" id="IPR010659">
    <property type="entry name" value="RVT_connect"/>
</dbReference>
<dbReference type="InterPro" id="IPR010661">
    <property type="entry name" value="RVT_thumb"/>
</dbReference>
<dbReference type="InterPro" id="IPR001878">
    <property type="entry name" value="Znf_CCHC"/>
</dbReference>
<dbReference type="InterPro" id="IPR036875">
    <property type="entry name" value="Znf_CCHC_sf"/>
</dbReference>
<dbReference type="PANTHER" id="PTHR41694">
    <property type="entry name" value="ENDOGENOUS RETROVIRUS GROUP K MEMBER POL PROTEIN"/>
    <property type="match status" value="1"/>
</dbReference>
<dbReference type="PANTHER" id="PTHR41694:SF3">
    <property type="entry name" value="RNA-DIRECTED DNA POLYMERASE-RELATED"/>
    <property type="match status" value="1"/>
</dbReference>
<dbReference type="Pfam" id="PF00540">
    <property type="entry name" value="Gag_p17"/>
    <property type="match status" value="1"/>
</dbReference>
<dbReference type="Pfam" id="PF19317">
    <property type="entry name" value="Gag_p24_C"/>
    <property type="match status" value="1"/>
</dbReference>
<dbReference type="Pfam" id="PF00552">
    <property type="entry name" value="IN_DBD_C"/>
    <property type="match status" value="1"/>
</dbReference>
<dbReference type="Pfam" id="PF02022">
    <property type="entry name" value="Integrase_Zn"/>
    <property type="match status" value="1"/>
</dbReference>
<dbReference type="Pfam" id="PF00075">
    <property type="entry name" value="RNase_H"/>
    <property type="match status" value="1"/>
</dbReference>
<dbReference type="Pfam" id="PF00665">
    <property type="entry name" value="rve"/>
    <property type="match status" value="1"/>
</dbReference>
<dbReference type="Pfam" id="PF00077">
    <property type="entry name" value="RVP"/>
    <property type="match status" value="1"/>
</dbReference>
<dbReference type="Pfam" id="PF00078">
    <property type="entry name" value="RVT_1"/>
    <property type="match status" value="1"/>
</dbReference>
<dbReference type="Pfam" id="PF06815">
    <property type="entry name" value="RVT_connect"/>
    <property type="match status" value="1"/>
</dbReference>
<dbReference type="Pfam" id="PF06817">
    <property type="entry name" value="RVT_thumb"/>
    <property type="match status" value="1"/>
</dbReference>
<dbReference type="Pfam" id="PF00098">
    <property type="entry name" value="zf-CCHC"/>
    <property type="match status" value="2"/>
</dbReference>
<dbReference type="PRINTS" id="PR00234">
    <property type="entry name" value="HIV1MATRIX"/>
</dbReference>
<dbReference type="SMART" id="SM00343">
    <property type="entry name" value="ZnF_C2HC"/>
    <property type="match status" value="2"/>
</dbReference>
<dbReference type="SUPFAM" id="SSF50630">
    <property type="entry name" value="Acid proteases"/>
    <property type="match status" value="1"/>
</dbReference>
<dbReference type="SUPFAM" id="SSF50122">
    <property type="entry name" value="DNA-binding domain of retroviral integrase"/>
    <property type="match status" value="1"/>
</dbReference>
<dbReference type="SUPFAM" id="SSF56672">
    <property type="entry name" value="DNA/RNA polymerases"/>
    <property type="match status" value="1"/>
</dbReference>
<dbReference type="SUPFAM" id="SSF46919">
    <property type="entry name" value="N-terminal Zn binding domain of HIV integrase"/>
    <property type="match status" value="1"/>
</dbReference>
<dbReference type="SUPFAM" id="SSF47836">
    <property type="entry name" value="Retroviral matrix proteins"/>
    <property type="match status" value="1"/>
</dbReference>
<dbReference type="SUPFAM" id="SSF47353">
    <property type="entry name" value="Retrovirus capsid dimerization domain-like"/>
    <property type="match status" value="1"/>
</dbReference>
<dbReference type="SUPFAM" id="SSF47943">
    <property type="entry name" value="Retrovirus capsid protein, N-terminal core domain"/>
    <property type="match status" value="1"/>
</dbReference>
<dbReference type="SUPFAM" id="SSF57756">
    <property type="entry name" value="Retrovirus zinc finger-like domains"/>
    <property type="match status" value="1"/>
</dbReference>
<dbReference type="SUPFAM" id="SSF53098">
    <property type="entry name" value="Ribonuclease H-like"/>
    <property type="match status" value="2"/>
</dbReference>
<dbReference type="PROSITE" id="PS50175">
    <property type="entry name" value="ASP_PROT_RETROV"/>
    <property type="match status" value="1"/>
</dbReference>
<dbReference type="PROSITE" id="PS00141">
    <property type="entry name" value="ASP_PROTEASE"/>
    <property type="match status" value="1"/>
</dbReference>
<dbReference type="PROSITE" id="PS50994">
    <property type="entry name" value="INTEGRASE"/>
    <property type="match status" value="1"/>
</dbReference>
<dbReference type="PROSITE" id="PS51027">
    <property type="entry name" value="INTEGRASE_DBD"/>
    <property type="match status" value="1"/>
</dbReference>
<dbReference type="PROSITE" id="PS50879">
    <property type="entry name" value="RNASE_H_1"/>
    <property type="match status" value="1"/>
</dbReference>
<dbReference type="PROSITE" id="PS50878">
    <property type="entry name" value="RT_POL"/>
    <property type="match status" value="1"/>
</dbReference>
<dbReference type="PROSITE" id="PS50158">
    <property type="entry name" value="ZF_CCHC"/>
    <property type="match status" value="2"/>
</dbReference>
<dbReference type="PROSITE" id="PS50876">
    <property type="entry name" value="ZF_INTEGRASE"/>
    <property type="match status" value="1"/>
</dbReference>
<keyword id="KW-0002">3D-structure</keyword>
<keyword id="KW-1073">Activation of host caspases by virus</keyword>
<keyword id="KW-0014">AIDS</keyword>
<keyword id="KW-0064">Aspartyl protease</keyword>
<keyword id="KW-0167">Capsid protein</keyword>
<keyword id="KW-0229">DNA integration</keyword>
<keyword id="KW-0233">DNA recombination</keyword>
<keyword id="KW-0238">DNA-binding</keyword>
<keyword id="KW-0239">DNA-directed DNA polymerase</keyword>
<keyword id="KW-0255">Endonuclease</keyword>
<keyword id="KW-1262">Eukaryotic host gene expression shutoff by virus</keyword>
<keyword id="KW-1193">Eukaryotic host translation shutoff by virus</keyword>
<keyword id="KW-1032">Host cell membrane</keyword>
<keyword id="KW-1035">Host cytoplasm</keyword>
<keyword id="KW-1039">Host endosome</keyword>
<keyword id="KW-1190">Host gene expression shutoff by virus</keyword>
<keyword id="KW-1043">Host membrane</keyword>
<keyword id="KW-1048">Host nucleus</keyword>
<keyword id="KW-0945">Host-virus interaction</keyword>
<keyword id="KW-0378">Hydrolase</keyword>
<keyword id="KW-0446">Lipid-binding</keyword>
<keyword id="KW-0449">Lipoprotein</keyword>
<keyword id="KW-0460">Magnesium</keyword>
<keyword id="KW-0472">Membrane</keyword>
<keyword id="KW-0479">Metal-binding</keyword>
<keyword id="KW-1119">Modulation of host cell apoptosis by virus</keyword>
<keyword id="KW-0511">Multifunctional enzyme</keyword>
<keyword id="KW-0519">Myristate</keyword>
<keyword id="KW-0540">Nuclease</keyword>
<keyword id="KW-0548">Nucleotidyltransferase</keyword>
<keyword id="KW-0597">Phosphoprotein</keyword>
<keyword id="KW-0645">Protease</keyword>
<keyword id="KW-1185">Reference proteome</keyword>
<keyword id="KW-0677">Repeat</keyword>
<keyword id="KW-0688">Ribosomal frameshifting</keyword>
<keyword id="KW-0694">RNA-binding</keyword>
<keyword id="KW-0695">RNA-directed DNA polymerase</keyword>
<keyword id="KW-0808">Transferase</keyword>
<keyword id="KW-1179">Viral genome integration</keyword>
<keyword id="KW-0543">Viral nucleoprotein</keyword>
<keyword id="KW-1163">Viral penetration into host nucleus</keyword>
<keyword id="KW-1188">Viral release from host cell</keyword>
<keyword id="KW-0946">Virion</keyword>
<keyword id="KW-0917">Virion maturation</keyword>
<keyword id="KW-1160">Virus entry into host cell</keyword>
<keyword id="KW-0862">Zinc</keyword>
<keyword id="KW-0863">Zinc-finger</keyword>
<name>POL_HV1RH</name>